<gene>
    <name evidence="1 6" type="primary">petB</name>
</gene>
<geneLocation type="chloroplast"/>
<organism>
    <name type="scientific">Chlamydomonas reinhardtii</name>
    <name type="common">Chlamydomonas smithii</name>
    <dbReference type="NCBI Taxonomy" id="3055"/>
    <lineage>
        <taxon>Eukaryota</taxon>
        <taxon>Viridiplantae</taxon>
        <taxon>Chlorophyta</taxon>
        <taxon>core chlorophytes</taxon>
        <taxon>Chlorophyceae</taxon>
        <taxon>CS clade</taxon>
        <taxon>Chlamydomonadales</taxon>
        <taxon>Chlamydomonadaceae</taxon>
        <taxon>Chlamydomonas</taxon>
    </lineage>
</organism>
<comment type="function">
    <text evidence="8">Component of the cytochrome b6-f complex, which mediates electron transfer between photosystem II (PSII) and photosystem I (PSI), cyclic electron flow around PSI, and state transitions.</text>
</comment>
<comment type="cofactor">
    <cofactor evidence="2">
        <name>heme b</name>
        <dbReference type="ChEBI" id="CHEBI:60344"/>
    </cofactor>
    <text evidence="2">Binds 2 heme b groups non-covalently with two histidine residues as axial ligands.</text>
</comment>
<comment type="cofactor">
    <cofactor evidence="2 3">
        <name>heme c</name>
        <dbReference type="ChEBI" id="CHEBI:61717"/>
    </cofactor>
    <text evidence="2 3">Binds one heme group covalently by a single cysteine link with no axial amino acid ligand; this heme was named heme ci.</text>
</comment>
<comment type="subunit">
    <text evidence="2">The 4 large subunits of the cytochrome b6-f complex are cytochrome b6, subunit IV (17 kDa polypeptide, PetD), cytochrome f and the Rieske protein, while the 4 small subunits are PetG, PetL, PetM and PetN. The complex functions as a dimer.</text>
</comment>
<comment type="subcellular location">
    <subcellularLocation>
        <location>Plastid</location>
        <location>Chloroplast thylakoid membrane</location>
        <topology evidence="7">Multi-pass membrane protein</topology>
    </subcellularLocation>
</comment>
<comment type="PTM">
    <text>The N-terminus is blocked.</text>
</comment>
<comment type="miscellaneous">
    <text evidence="4">Creation by mutagenesis of a Pro residue at position 204 (a codon that is known to be RNA edited to a Leu codon in tobacco and maize) leads to assembly defective mutants, indicating that the Leu-204 is essential for proper assembly of the cytochrome b6-f complex. This is probably due to lack of assembly of apocytochrome b6 with one of its heme groups.</text>
</comment>
<comment type="miscellaneous">
    <text evidence="1">Heme 1 (or BH or b566) is high-potential and absorbs at about 566 nm, and heme 2 (or BL or b562) is low-potential and absorbs at about 562 nm.</text>
</comment>
<comment type="similarity">
    <text evidence="1">Belongs to the cytochrome b family. PetB subfamily.</text>
</comment>
<proteinExistence type="evidence at protein level"/>
<sequence>MSKVYDWFEERLEIQAIADDITSKYVPPHVNIFYCIGGITFTCFLVQVATGFAMTFYYRPTVAEAFASVQYIMTDVNFGWLIRSIHRWSASMMVLMMVLHVFRVYLTGGFKRPRELTWVTGVIMAVCTVSFGVTGYSLPWDQVGYWAVKIVTGVPDAIPGVGGFIVELLRGGVGVGQATLTRFYSLHTFVLPLLTAVFMLMHFLMIRKQGISGPL</sequence>
<accession>Q00471</accession>
<accession>B7U1F1</accession>
<reference key="1">
    <citation type="journal article" date="1991" name="FEBS Lett.">
        <title>Nucleotide sequences of the continuous and separated petA, petB and petD chloroplast genes in Chlamydomonas reinhardtii.</title>
        <authorList>
            <person name="Bueschlen S."/>
            <person name="Choquet Y."/>
            <person name="Kuras R."/>
            <person name="Wollman F.A."/>
        </authorList>
    </citation>
    <scope>NUCLEOTIDE SEQUENCE [GENOMIC DNA]</scope>
    <source>
        <strain>137c / CC-125</strain>
    </source>
</reference>
<reference key="2">
    <citation type="journal article" date="1992" name="Plant Mol. Biol.">
        <title>Nucleotide sequence of the frxC, petB and trnL genes in the chloroplast genome of Chlamydomonas reinhardtii.</title>
        <authorList>
            <person name="Huang C."/>
            <person name="Liu X.-Q."/>
        </authorList>
    </citation>
    <scope>NUCLEOTIDE SEQUENCE [GENOMIC DNA]</scope>
</reference>
<reference key="3">
    <citation type="journal article" date="2009" name="BMC Evol. Biol.">
        <title>Nucleotide diversity of the Chlamydomonas reinhardtii plastid genome: addressing the mutational-hazard hypothesis.</title>
        <authorList>
            <person name="Smith D.R."/>
            <person name="Lee R.W."/>
        </authorList>
    </citation>
    <scope>NUCLEOTIDE SEQUENCE [LARGE SCALE GENOMIC DNA]</scope>
    <source>
        <strain>CC-503</strain>
    </source>
</reference>
<reference key="4">
    <citation type="journal article" date="2002" name="Plant Cell">
        <title>The Chlamydomonas reinhardtii plastid chromosome: islands of genes in a sea of repeats.</title>
        <authorList>
            <person name="Maul J.E."/>
            <person name="Lilly J.W."/>
            <person name="Cui L."/>
            <person name="dePamphilis C.W."/>
            <person name="Miller W."/>
            <person name="Harris E.H."/>
            <person name="Stern D.B."/>
        </authorList>
    </citation>
    <scope>IDENTIFICATION</scope>
    <scope>COMPLETE PLASTID GENOME</scope>
</reference>
<reference key="5">
    <citation type="journal article" date="1995" name="J. Biol. Chem.">
        <title>Purification and characterization of the cytochrome b6 f complex from Chlamydomonas reinhardtii.</title>
        <authorList>
            <person name="Pierre Y."/>
            <person name="Breyton C."/>
            <person name="Kramer D."/>
            <person name="Popot J.-L."/>
        </authorList>
    </citation>
    <scope>CHARACTERIZATION</scope>
    <source>
        <strain>WT12</strain>
    </source>
</reference>
<reference key="6">
    <citation type="journal article" date="1997" name="Plant Mol. Biol.">
        <title>Mutations of cytochrome b6 in Chlamydomonas reinhardtii disclose the functional significance for a proline to leucine conversion by petB editing in maize and tobacco.</title>
        <authorList>
            <person name="Zito F."/>
            <person name="Kuras R."/>
            <person name="Choquet Y."/>
            <person name="Koessel H."/>
            <person name="Wollman F.-A."/>
        </authorList>
    </citation>
    <scope>MUTAGENESIS OF LEU-204</scope>
    <source>
        <strain>137c / CC-125</strain>
    </source>
</reference>
<reference key="7">
    <citation type="journal article" date="2004" name="Biochemistry">
        <title>Biochemical and spectroscopic characterization of the covalent binding of heme to cytochrome b6.</title>
        <authorList>
            <person name="de Vitry C."/>
            <person name="Desbois A."/>
            <person name="Redeker V."/>
            <person name="Zito F."/>
            <person name="Wollman F.A."/>
        </authorList>
    </citation>
    <scope>HEME-BINDING</scope>
    <scope>COFACTOR</scope>
    <scope>MUTAGENESIS OF CYS-35</scope>
</reference>
<reference evidence="10" key="8">
    <citation type="journal article" date="2003" name="Nature">
        <title>An atypical haem in the cytochrome b(6)f complex.</title>
        <authorList>
            <person name="Stroebel D."/>
            <person name="Choquet Y."/>
            <person name="Popot J.-L."/>
            <person name="Picot D."/>
        </authorList>
    </citation>
    <scope>X-RAY CRYSTALLOGRAPHY (3.1 ANGSTROMS) IN COMPLEX WITH 3 HEMES AND OTHER SUBUNITS OF THE CYTOCHROME B6F COMPLEX</scope>
    <scope>FUNCTION</scope>
    <scope>COFACTOR</scope>
    <scope>SUBUNIT</scope>
</reference>
<dbReference type="EMBL" id="X62905">
    <property type="protein sequence ID" value="CAA44690.1"/>
    <property type="molecule type" value="Genomic_DNA"/>
</dbReference>
<dbReference type="EMBL" id="X72918">
    <property type="protein sequence ID" value="CAA51423.1"/>
    <property type="molecule type" value="Genomic_DNA"/>
</dbReference>
<dbReference type="EMBL" id="FJ423446">
    <property type="protein sequence ID" value="ACJ50098.1"/>
    <property type="molecule type" value="Genomic_DNA"/>
</dbReference>
<dbReference type="EMBL" id="BK000554">
    <property type="protein sequence ID" value="DAA00911.1"/>
    <property type="molecule type" value="Genomic_DNA"/>
</dbReference>
<dbReference type="PIR" id="S21253">
    <property type="entry name" value="S21253"/>
</dbReference>
<dbReference type="RefSeq" id="NP_958365.1">
    <property type="nucleotide sequence ID" value="NC_005353.1"/>
</dbReference>
<dbReference type="PDB" id="1Q90">
    <property type="method" value="X-ray"/>
    <property type="resolution" value="3.10 A"/>
    <property type="chains" value="B=1-215"/>
</dbReference>
<dbReference type="PDBsum" id="1Q90"/>
<dbReference type="SMR" id="Q00471"/>
<dbReference type="DIP" id="DIP-58593N"/>
<dbReference type="FunCoup" id="Q00471">
    <property type="interactions" value="231"/>
</dbReference>
<dbReference type="IntAct" id="Q00471">
    <property type="interactions" value="9"/>
</dbReference>
<dbReference type="STRING" id="3055.Q00471"/>
<dbReference type="PaxDb" id="3055-DAA00911"/>
<dbReference type="GeneID" id="2717017"/>
<dbReference type="KEGG" id="cre:ChreCp008"/>
<dbReference type="eggNOG" id="KOG4663">
    <property type="taxonomic scope" value="Eukaryota"/>
</dbReference>
<dbReference type="HOGENOM" id="CLU_031114_0_2_1"/>
<dbReference type="InParanoid" id="Q00471"/>
<dbReference type="BioCyc" id="CHLAMY:CHRECP008-MONOMER"/>
<dbReference type="BioCyc" id="MetaCyc:CHRECP008-MONOMER"/>
<dbReference type="EvolutionaryTrace" id="Q00471"/>
<dbReference type="Proteomes" id="UP000006906">
    <property type="component" value="Chloroplast"/>
</dbReference>
<dbReference type="GO" id="GO:0009535">
    <property type="term" value="C:chloroplast thylakoid membrane"/>
    <property type="evidence" value="ECO:0007669"/>
    <property type="project" value="UniProtKB-SubCell"/>
</dbReference>
<dbReference type="GO" id="GO:0016020">
    <property type="term" value="C:membrane"/>
    <property type="evidence" value="ECO:0000318"/>
    <property type="project" value="GO_Central"/>
</dbReference>
<dbReference type="GO" id="GO:0045158">
    <property type="term" value="F:electron transporter, transferring electrons within cytochrome b6/f complex of photosystem II activity"/>
    <property type="evidence" value="ECO:0007669"/>
    <property type="project" value="UniProtKB-UniRule"/>
</dbReference>
<dbReference type="GO" id="GO:0046872">
    <property type="term" value="F:metal ion binding"/>
    <property type="evidence" value="ECO:0007669"/>
    <property type="project" value="UniProtKB-KW"/>
</dbReference>
<dbReference type="GO" id="GO:0016491">
    <property type="term" value="F:oxidoreductase activity"/>
    <property type="evidence" value="ECO:0007669"/>
    <property type="project" value="InterPro"/>
</dbReference>
<dbReference type="GO" id="GO:0015979">
    <property type="term" value="P:photosynthesis"/>
    <property type="evidence" value="ECO:0007669"/>
    <property type="project" value="UniProtKB-UniRule"/>
</dbReference>
<dbReference type="GO" id="GO:0022904">
    <property type="term" value="P:respiratory electron transport chain"/>
    <property type="evidence" value="ECO:0007669"/>
    <property type="project" value="InterPro"/>
</dbReference>
<dbReference type="CDD" id="cd00284">
    <property type="entry name" value="Cytochrome_b_N"/>
    <property type="match status" value="1"/>
</dbReference>
<dbReference type="FunFam" id="1.20.810.10:FF:000001">
    <property type="entry name" value="Cytochrome b6"/>
    <property type="match status" value="1"/>
</dbReference>
<dbReference type="Gene3D" id="1.20.810.10">
    <property type="entry name" value="Cytochrome Bc1 Complex, Chain C"/>
    <property type="match status" value="1"/>
</dbReference>
<dbReference type="HAMAP" id="MF_00633">
    <property type="entry name" value="Cytb6_f_cytb6"/>
    <property type="match status" value="1"/>
</dbReference>
<dbReference type="InterPro" id="IPR005797">
    <property type="entry name" value="Cyt_b/b6_N"/>
</dbReference>
<dbReference type="InterPro" id="IPR023530">
    <property type="entry name" value="Cyt_B6_PetB"/>
</dbReference>
<dbReference type="InterPro" id="IPR027387">
    <property type="entry name" value="Cytb/b6-like_sf"/>
</dbReference>
<dbReference type="InterPro" id="IPR048259">
    <property type="entry name" value="Cytochrome_b_N_euk/bac"/>
</dbReference>
<dbReference type="InterPro" id="IPR016174">
    <property type="entry name" value="Di-haem_cyt_TM"/>
</dbReference>
<dbReference type="NCBIfam" id="NF002990">
    <property type="entry name" value="PRK03735.1"/>
    <property type="match status" value="1"/>
</dbReference>
<dbReference type="PANTHER" id="PTHR19271">
    <property type="entry name" value="CYTOCHROME B"/>
    <property type="match status" value="1"/>
</dbReference>
<dbReference type="PANTHER" id="PTHR19271:SF16">
    <property type="entry name" value="CYTOCHROME B"/>
    <property type="match status" value="1"/>
</dbReference>
<dbReference type="Pfam" id="PF00033">
    <property type="entry name" value="Cytochrome_B"/>
    <property type="match status" value="1"/>
</dbReference>
<dbReference type="PIRSF" id="PIRSF000032">
    <property type="entry name" value="Cytochrome_b6"/>
    <property type="match status" value="1"/>
</dbReference>
<dbReference type="SUPFAM" id="SSF81342">
    <property type="entry name" value="Transmembrane di-heme cytochromes"/>
    <property type="match status" value="1"/>
</dbReference>
<dbReference type="PROSITE" id="PS51002">
    <property type="entry name" value="CYTB_NTER"/>
    <property type="match status" value="1"/>
</dbReference>
<evidence type="ECO:0000255" key="1">
    <source>
        <dbReference type="HAMAP-Rule" id="MF_00633"/>
    </source>
</evidence>
<evidence type="ECO:0000269" key="2">
    <source>
    </source>
</evidence>
<evidence type="ECO:0000269" key="3">
    <source>
    </source>
</evidence>
<evidence type="ECO:0000269" key="4">
    <source>
    </source>
</evidence>
<evidence type="ECO:0000303" key="5">
    <source>
    </source>
</evidence>
<evidence type="ECO:0000303" key="6">
    <source>
    </source>
</evidence>
<evidence type="ECO:0000305" key="7"/>
<evidence type="ECO:0000305" key="8">
    <source>
    </source>
</evidence>
<evidence type="ECO:0000305" key="9">
    <source>
    </source>
</evidence>
<evidence type="ECO:0007744" key="10">
    <source>
        <dbReference type="PDB" id="1Q90"/>
    </source>
</evidence>
<evidence type="ECO:0007829" key="11">
    <source>
        <dbReference type="PDB" id="1Q90"/>
    </source>
</evidence>
<protein>
    <recommendedName>
        <fullName evidence="1 5 6">Cytochrome b6</fullName>
    </recommendedName>
</protein>
<keyword id="KW-0002">3D-structure</keyword>
<keyword id="KW-0150">Chloroplast</keyword>
<keyword id="KW-0249">Electron transport</keyword>
<keyword id="KW-0349">Heme</keyword>
<keyword id="KW-0408">Iron</keyword>
<keyword id="KW-0472">Membrane</keyword>
<keyword id="KW-0479">Metal-binding</keyword>
<keyword id="KW-0602">Photosynthesis</keyword>
<keyword id="KW-0934">Plastid</keyword>
<keyword id="KW-1185">Reference proteome</keyword>
<keyword id="KW-0793">Thylakoid</keyword>
<keyword id="KW-0812">Transmembrane</keyword>
<keyword id="KW-1133">Transmembrane helix</keyword>
<keyword id="KW-0813">Transport</keyword>
<feature type="chain" id="PRO_0000061787" description="Cytochrome b6">
    <location>
        <begin position="1"/>
        <end position="215"/>
    </location>
</feature>
<feature type="transmembrane region" description="Helical" evidence="1">
    <location>
        <begin position="32"/>
        <end position="52"/>
    </location>
</feature>
<feature type="transmembrane region" description="Helical" evidence="1">
    <location>
        <begin position="90"/>
        <end position="110"/>
    </location>
</feature>
<feature type="transmembrane region" description="Helical" evidence="1">
    <location>
        <begin position="116"/>
        <end position="136"/>
    </location>
</feature>
<feature type="transmembrane region" description="Helical" evidence="1">
    <location>
        <begin position="186"/>
        <end position="206"/>
    </location>
</feature>
<feature type="binding site" description="covalent" evidence="2 9 10">
    <location>
        <position position="35"/>
    </location>
    <ligand>
        <name>heme c</name>
        <dbReference type="ChEBI" id="CHEBI:61717"/>
    </ligand>
</feature>
<feature type="binding site" evidence="2 10">
    <location>
        <position position="37"/>
    </location>
    <ligand>
        <name>heme b</name>
        <dbReference type="ChEBI" id="CHEBI:60344"/>
        <label>1</label>
    </ligand>
</feature>
<feature type="binding site" evidence="2 10">
    <location>
        <position position="83"/>
    </location>
    <ligand>
        <name>heme b</name>
        <dbReference type="ChEBI" id="CHEBI:60344"/>
        <label>2</label>
    </ligand>
</feature>
<feature type="binding site" description="axial binding residue" evidence="2 10">
    <location>
        <position position="86"/>
    </location>
    <ligand>
        <name>heme b</name>
        <dbReference type="ChEBI" id="CHEBI:60344"/>
        <label>2</label>
    </ligand>
    <ligandPart>
        <name>Fe</name>
        <dbReference type="ChEBI" id="CHEBI:18248"/>
    </ligandPart>
</feature>
<feature type="binding site" description="axial binding residue" evidence="2 10">
    <location>
        <position position="100"/>
    </location>
    <ligand>
        <name>heme b</name>
        <dbReference type="ChEBI" id="CHEBI:60344"/>
        <label>1</label>
    </ligand>
    <ligandPart>
        <name>Fe</name>
        <dbReference type="ChEBI" id="CHEBI:18248"/>
    </ligandPart>
</feature>
<feature type="binding site" evidence="2 10">
    <location>
        <position position="103"/>
    </location>
    <ligand>
        <name>heme b</name>
        <dbReference type="ChEBI" id="CHEBI:60344"/>
        <label>1</label>
    </ligand>
</feature>
<feature type="binding site" evidence="2 10">
    <location>
        <position position="114"/>
    </location>
    <ligand>
        <name>heme b</name>
        <dbReference type="ChEBI" id="CHEBI:60344"/>
        <label>1</label>
    </ligand>
</feature>
<feature type="binding site" description="axial binding residue" evidence="2 10">
    <location>
        <position position="187"/>
    </location>
    <ligand>
        <name>heme b</name>
        <dbReference type="ChEBI" id="CHEBI:60344"/>
        <label>2</label>
    </ligand>
    <ligandPart>
        <name>Fe</name>
        <dbReference type="ChEBI" id="CHEBI:18248"/>
    </ligandPart>
</feature>
<feature type="binding site" description="axial binding residue" evidence="2 10">
    <location>
        <position position="202"/>
    </location>
    <ligand>
        <name>heme b</name>
        <dbReference type="ChEBI" id="CHEBI:60344"/>
        <label>1</label>
    </ligand>
    <ligandPart>
        <name>Fe</name>
        <dbReference type="ChEBI" id="CHEBI:18248"/>
    </ligandPart>
</feature>
<feature type="binding site" evidence="2 10">
    <location>
        <position position="207"/>
    </location>
    <ligand>
        <name>heme c</name>
        <dbReference type="ChEBI" id="CHEBI:61717"/>
    </ligand>
</feature>
<feature type="binding site" evidence="2 10">
    <location>
        <position position="211"/>
    </location>
    <ligand>
        <name>heme c</name>
        <dbReference type="ChEBI" id="CHEBI:61717"/>
    </ligand>
</feature>
<feature type="binding site" evidence="2 10">
    <location>
        <position position="212"/>
    </location>
    <ligand>
        <name>heme b</name>
        <dbReference type="ChEBI" id="CHEBI:60344"/>
        <label>1</label>
    </ligand>
</feature>
<feature type="mutagenesis site" description="Generates Chlamydomonas strains that are unable to grow phototrophically and unable to assemble cytochrome b6f complexes." evidence="3">
    <original>C</original>
    <variation>V</variation>
    <location>
        <position position="35"/>
    </location>
</feature>
<feature type="mutagenesis site" description="Leads to defective cytochrome b6-f complex assembly, probably due to lack of heme assembly." evidence="4">
    <original>L</original>
    <variation>P</variation>
    <location>
        <position position="204"/>
    </location>
</feature>
<feature type="helix" evidence="11">
    <location>
        <begin position="5"/>
        <end position="12"/>
    </location>
</feature>
<feature type="helix" evidence="11">
    <location>
        <begin position="14"/>
        <end position="23"/>
    </location>
</feature>
<feature type="helix" evidence="11">
    <location>
        <begin position="33"/>
        <end position="35"/>
    </location>
</feature>
<feature type="helix" evidence="11">
    <location>
        <begin position="36"/>
        <end position="54"/>
    </location>
</feature>
<feature type="turn" evidence="11">
    <location>
        <begin position="55"/>
        <end position="57"/>
    </location>
</feature>
<feature type="turn" evidence="11">
    <location>
        <begin position="62"/>
        <end position="64"/>
    </location>
</feature>
<feature type="helix" evidence="11">
    <location>
        <begin position="65"/>
        <end position="74"/>
    </location>
</feature>
<feature type="helix" evidence="11">
    <location>
        <begin position="79"/>
        <end position="105"/>
    </location>
</feature>
<feature type="turn" evidence="11">
    <location>
        <begin position="106"/>
        <end position="110"/>
    </location>
</feature>
<feature type="strand" evidence="11">
    <location>
        <begin position="111"/>
        <end position="113"/>
    </location>
</feature>
<feature type="helix" evidence="11">
    <location>
        <begin position="115"/>
        <end position="137"/>
    </location>
</feature>
<feature type="helix" evidence="11">
    <location>
        <begin position="142"/>
        <end position="153"/>
    </location>
</feature>
<feature type="helix" evidence="11">
    <location>
        <begin position="154"/>
        <end position="157"/>
    </location>
</feature>
<feature type="helix" evidence="11">
    <location>
        <begin position="161"/>
        <end position="170"/>
    </location>
</feature>
<feature type="strand" evidence="11">
    <location>
        <begin position="172"/>
        <end position="176"/>
    </location>
</feature>
<feature type="helix" evidence="11">
    <location>
        <begin position="177"/>
        <end position="188"/>
    </location>
</feature>
<feature type="helix" evidence="11">
    <location>
        <begin position="190"/>
        <end position="209"/>
    </location>
</feature>
<name>CYB6_CHLRE</name>